<reference key="1">
    <citation type="journal article" date="2007" name="Theor. Appl. Genet.">
        <title>Complete chloroplast genome sequences of Hordeum vulgare, Sorghum bicolor and Agrostis stolonifera, and comparative analyses with other grass genomes.</title>
        <authorList>
            <person name="Saski C."/>
            <person name="Lee S.-B."/>
            <person name="Fjellheim S."/>
            <person name="Guda C."/>
            <person name="Jansen R.K."/>
            <person name="Luo H."/>
            <person name="Tomkins J."/>
            <person name="Rognli O.A."/>
            <person name="Daniell H."/>
            <person name="Clarke J.L."/>
        </authorList>
    </citation>
    <scope>NUCLEOTIDE SEQUENCE [LARGE SCALE GENOMIC DNA]</scope>
    <source>
        <strain>cv. BTx623</strain>
    </source>
</reference>
<sequence>MNWRSEHIWIELLKGSRKRGNFFWACILFLGSLGFLAVGASSYLGKNMISLLPSQQILFFPQGVVMSFYGIAGLFISSYLWCTILWNVGSGYDRFDRKEGIVCIFRWGFPGIKRRIFLQFLVRDIQSIRIQVKEGLYPRRILYMEIRGQGVIPLTRTDEKFFTPREIEQKAAELAYFLGVPIEVF</sequence>
<accession>A1E9T5</accession>
<keyword id="KW-0150">Chloroplast</keyword>
<keyword id="KW-0472">Membrane</keyword>
<keyword id="KW-0602">Photosynthesis</keyword>
<keyword id="KW-0934">Plastid</keyword>
<keyword id="KW-1185">Reference proteome</keyword>
<keyword id="KW-0793">Thylakoid</keyword>
<keyword id="KW-0812">Transmembrane</keyword>
<keyword id="KW-1133">Transmembrane helix</keyword>
<organism>
    <name type="scientific">Sorghum bicolor</name>
    <name type="common">Sorghum</name>
    <name type="synonym">Sorghum vulgare</name>
    <dbReference type="NCBI Taxonomy" id="4558"/>
    <lineage>
        <taxon>Eukaryota</taxon>
        <taxon>Viridiplantae</taxon>
        <taxon>Streptophyta</taxon>
        <taxon>Embryophyta</taxon>
        <taxon>Tracheophyta</taxon>
        <taxon>Spermatophyta</taxon>
        <taxon>Magnoliopsida</taxon>
        <taxon>Liliopsida</taxon>
        <taxon>Poales</taxon>
        <taxon>Poaceae</taxon>
        <taxon>PACMAD clade</taxon>
        <taxon>Panicoideae</taxon>
        <taxon>Andropogonodae</taxon>
        <taxon>Andropogoneae</taxon>
        <taxon>Sorghinae</taxon>
        <taxon>Sorghum</taxon>
    </lineage>
</organism>
<geneLocation type="chloroplast"/>
<evidence type="ECO:0000255" key="1">
    <source>
        <dbReference type="HAMAP-Rule" id="MF_00437"/>
    </source>
</evidence>
<feature type="chain" id="PRO_0000275674" description="Photosystem I assembly protein Ycf4">
    <location>
        <begin position="1"/>
        <end position="185"/>
    </location>
</feature>
<feature type="transmembrane region" description="Helical" evidence="1">
    <location>
        <begin position="20"/>
        <end position="40"/>
    </location>
</feature>
<feature type="transmembrane region" description="Helical" evidence="1">
    <location>
        <begin position="57"/>
        <end position="77"/>
    </location>
</feature>
<name>YCF4_SORBI</name>
<gene>
    <name evidence="1" type="primary">ycf4</name>
</gene>
<protein>
    <recommendedName>
        <fullName evidence="1">Photosystem I assembly protein Ycf4</fullName>
    </recommendedName>
</protein>
<proteinExistence type="inferred from homology"/>
<comment type="function">
    <text evidence="1">Seems to be required for the assembly of the photosystem I complex.</text>
</comment>
<comment type="subcellular location">
    <subcellularLocation>
        <location evidence="1">Plastid</location>
        <location evidence="1">Chloroplast thylakoid membrane</location>
        <topology evidence="1">Multi-pass membrane protein</topology>
    </subcellularLocation>
</comment>
<comment type="similarity">
    <text evidence="1">Belongs to the Ycf4 family.</text>
</comment>
<dbReference type="EMBL" id="EF115542">
    <property type="protein sequence ID" value="ABK79507.1"/>
    <property type="molecule type" value="Genomic_DNA"/>
</dbReference>
<dbReference type="RefSeq" id="YP_899418.1">
    <property type="nucleotide sequence ID" value="NC_008602.1"/>
</dbReference>
<dbReference type="FunCoup" id="A1E9T5">
    <property type="interactions" value="152"/>
</dbReference>
<dbReference type="STRING" id="4558.A1E9T5"/>
<dbReference type="GeneID" id="4549170"/>
<dbReference type="KEGG" id="sbi:4549170"/>
<dbReference type="InParanoid" id="A1E9T5"/>
<dbReference type="OrthoDB" id="588925at2759"/>
<dbReference type="Proteomes" id="UP000000768">
    <property type="component" value="Chloroplast"/>
</dbReference>
<dbReference type="GO" id="GO:0009535">
    <property type="term" value="C:chloroplast thylakoid membrane"/>
    <property type="evidence" value="ECO:0007669"/>
    <property type="project" value="UniProtKB-SubCell"/>
</dbReference>
<dbReference type="GO" id="GO:0009522">
    <property type="term" value="C:photosystem I"/>
    <property type="evidence" value="ECO:0007669"/>
    <property type="project" value="InterPro"/>
</dbReference>
<dbReference type="GO" id="GO:0015979">
    <property type="term" value="P:photosynthesis"/>
    <property type="evidence" value="ECO:0007669"/>
    <property type="project" value="UniProtKB-UniRule"/>
</dbReference>
<dbReference type="HAMAP" id="MF_00437">
    <property type="entry name" value="Ycf4"/>
    <property type="match status" value="1"/>
</dbReference>
<dbReference type="InterPro" id="IPR003359">
    <property type="entry name" value="PSI_Ycf4_assembly"/>
</dbReference>
<dbReference type="PANTHER" id="PTHR33288">
    <property type="match status" value="1"/>
</dbReference>
<dbReference type="PANTHER" id="PTHR33288:SF4">
    <property type="entry name" value="PHOTOSYSTEM I ASSEMBLY PROTEIN YCF4"/>
    <property type="match status" value="1"/>
</dbReference>
<dbReference type="Pfam" id="PF02392">
    <property type="entry name" value="Ycf4"/>
    <property type="match status" value="1"/>
</dbReference>